<accession>P28097</accession>
<keyword id="KW-0217">Developmental protein</keyword>
<keyword id="KW-1015">Disulfide bond</keyword>
<keyword id="KW-0272">Extracellular matrix</keyword>
<keyword id="KW-0325">Glycoprotein</keyword>
<keyword id="KW-0449">Lipoprotein</keyword>
<keyword id="KW-1185">Reference proteome</keyword>
<keyword id="KW-0964">Secreted</keyword>
<keyword id="KW-0879">Wnt signaling pathway</keyword>
<name>WNT6_STRPU</name>
<evidence type="ECO:0000250" key="1">
    <source>
        <dbReference type="UniProtKB" id="P27467"/>
    </source>
</evidence>
<evidence type="ECO:0000250" key="2">
    <source>
        <dbReference type="UniProtKB" id="P28026"/>
    </source>
</evidence>
<evidence type="ECO:0000250" key="3">
    <source>
        <dbReference type="UniProtKB" id="P56704"/>
    </source>
</evidence>
<evidence type="ECO:0000255" key="4"/>
<evidence type="ECO:0000305" key="5"/>
<reference key="1">
    <citation type="journal article" date="1992" name="Proc. Natl. Acad. Sci. U.S.A.">
        <title>Diversification of the Wnt gene family on the ancestral lineage of vertebrates.</title>
        <authorList>
            <person name="Sidow A."/>
        </authorList>
    </citation>
    <scope>NUCLEOTIDE SEQUENCE [GENOMIC DNA]</scope>
</reference>
<proteinExistence type="inferred from homology"/>
<gene>
    <name type="primary">WNT-6</name>
</gene>
<sequence length="117" mass="13015">SGSCTLKTCWKKMPTFRDVGNRLKSYFDGAVKVTGGNSGENLIPEDETVKQPTIKDLVYSMESHDFCEPDRKSGSLGTEGRRCNSTSMDVGGCDIMCCGRGYHEVLAEKRENCRCRF</sequence>
<protein>
    <recommendedName>
        <fullName>Protein Wnt-6</fullName>
    </recommendedName>
</protein>
<feature type="chain" id="PRO_0000200640" description="Protein Wnt-6">
    <location>
        <begin position="1" status="less than"/>
        <end position="117" status="greater than"/>
    </location>
</feature>
<feature type="lipid moiety-binding region" description="O-palmitoleoyl serine; by PORCN" evidence="3">
    <location>
        <position position="1"/>
    </location>
</feature>
<feature type="glycosylation site" description="N-linked (GlcNAc...) asparagine" evidence="4">
    <location>
        <position position="84"/>
    </location>
</feature>
<feature type="disulfide bond" evidence="2">
    <location>
        <begin position="83"/>
        <end position="98"/>
    </location>
</feature>
<feature type="non-terminal residue">
    <location>
        <position position="1"/>
    </location>
</feature>
<feature type="non-terminal residue">
    <location>
        <position position="117"/>
    </location>
</feature>
<comment type="function">
    <text>Ligand for members of the frizzled family of seven transmembrane receptors. Probable developmental protein. May be a signaling molecule which affects the development of discrete regions of tissues. Is likely to signal over only few cell diameters.</text>
</comment>
<comment type="subcellular location">
    <subcellularLocation>
        <location>Secreted</location>
        <location>Extracellular space</location>
        <location>Extracellular matrix</location>
    </subcellularLocation>
</comment>
<comment type="PTM">
    <text evidence="1 3">Palmitoleoylation is required for efficient binding to frizzled receptors. Depalmitoleoylation leads to Wnt signaling pathway inhibition.</text>
</comment>
<comment type="similarity">
    <text evidence="5">Belongs to the Wnt family.</text>
</comment>
<organism>
    <name type="scientific">Strongylocentrotus purpuratus</name>
    <name type="common">Purple sea urchin</name>
    <dbReference type="NCBI Taxonomy" id="7668"/>
    <lineage>
        <taxon>Eukaryota</taxon>
        <taxon>Metazoa</taxon>
        <taxon>Echinodermata</taxon>
        <taxon>Eleutherozoa</taxon>
        <taxon>Echinozoa</taxon>
        <taxon>Echinoidea</taxon>
        <taxon>Euechinoidea</taxon>
        <taxon>Echinacea</taxon>
        <taxon>Camarodonta</taxon>
        <taxon>Echinidea</taxon>
        <taxon>Strongylocentrotidae</taxon>
        <taxon>Strongylocentrotus</taxon>
    </lineage>
</organism>
<dbReference type="EMBL" id="M91304">
    <property type="protein sequence ID" value="AAA30086.1"/>
    <property type="molecule type" value="Genomic_DNA"/>
</dbReference>
<dbReference type="SMR" id="P28097"/>
<dbReference type="STRING" id="7668.P28097"/>
<dbReference type="GlyCosmos" id="P28097">
    <property type="glycosylation" value="1 site, No reported glycans"/>
</dbReference>
<dbReference type="eggNOG" id="KOG3913">
    <property type="taxonomic scope" value="Eukaryota"/>
</dbReference>
<dbReference type="HOGENOM" id="CLU_033039_1_3_1"/>
<dbReference type="InParanoid" id="P28097"/>
<dbReference type="Proteomes" id="UP000007110">
    <property type="component" value="Unassembled WGS sequence"/>
</dbReference>
<dbReference type="GO" id="GO:0005576">
    <property type="term" value="C:extracellular region"/>
    <property type="evidence" value="ECO:0007669"/>
    <property type="project" value="UniProtKB-KW"/>
</dbReference>
<dbReference type="GO" id="GO:0005102">
    <property type="term" value="F:signaling receptor binding"/>
    <property type="evidence" value="ECO:0007669"/>
    <property type="project" value="InterPro"/>
</dbReference>
<dbReference type="GO" id="GO:0016055">
    <property type="term" value="P:Wnt signaling pathway"/>
    <property type="evidence" value="ECO:0007669"/>
    <property type="project" value="UniProtKB-KW"/>
</dbReference>
<dbReference type="Gene3D" id="3.30.2460.20">
    <property type="match status" value="1"/>
</dbReference>
<dbReference type="InterPro" id="IPR005817">
    <property type="entry name" value="Wnt"/>
</dbReference>
<dbReference type="InterPro" id="IPR043158">
    <property type="entry name" value="Wnt_C"/>
</dbReference>
<dbReference type="PANTHER" id="PTHR12027:SF72">
    <property type="entry name" value="PROTEIN WNT-6"/>
    <property type="match status" value="1"/>
</dbReference>
<dbReference type="PANTHER" id="PTHR12027">
    <property type="entry name" value="WNT RELATED"/>
    <property type="match status" value="1"/>
</dbReference>
<dbReference type="Pfam" id="PF00110">
    <property type="entry name" value="wnt"/>
    <property type="match status" value="1"/>
</dbReference>
<dbReference type="SMART" id="SM00097">
    <property type="entry name" value="WNT1"/>
    <property type="match status" value="1"/>
</dbReference>